<dbReference type="EC" id="2.8.1.4" evidence="1"/>
<dbReference type="EMBL" id="CP000020">
    <property type="protein sequence ID" value="AAW85211.1"/>
    <property type="molecule type" value="Genomic_DNA"/>
</dbReference>
<dbReference type="RefSeq" id="WP_011261436.1">
    <property type="nucleotide sequence ID" value="NC_006840.2"/>
</dbReference>
<dbReference type="RefSeq" id="YP_204099.1">
    <property type="nucleotide sequence ID" value="NC_006840.2"/>
</dbReference>
<dbReference type="SMR" id="Q5E6Y5"/>
<dbReference type="STRING" id="312309.VF_0716"/>
<dbReference type="DNASU" id="3278292"/>
<dbReference type="EnsemblBacteria" id="AAW85211">
    <property type="protein sequence ID" value="AAW85211"/>
    <property type="gene ID" value="VF_0716"/>
</dbReference>
<dbReference type="GeneID" id="54163371"/>
<dbReference type="KEGG" id="vfi:VF_0716"/>
<dbReference type="PATRIC" id="fig|312309.11.peg.710"/>
<dbReference type="eggNOG" id="COG0301">
    <property type="taxonomic scope" value="Bacteria"/>
</dbReference>
<dbReference type="eggNOG" id="COG0607">
    <property type="taxonomic scope" value="Bacteria"/>
</dbReference>
<dbReference type="HOGENOM" id="CLU_037952_4_1_6"/>
<dbReference type="OrthoDB" id="9773948at2"/>
<dbReference type="UniPathway" id="UPA00060"/>
<dbReference type="Proteomes" id="UP000000537">
    <property type="component" value="Chromosome I"/>
</dbReference>
<dbReference type="GO" id="GO:0005829">
    <property type="term" value="C:cytosol"/>
    <property type="evidence" value="ECO:0007669"/>
    <property type="project" value="TreeGrafter"/>
</dbReference>
<dbReference type="GO" id="GO:0005524">
    <property type="term" value="F:ATP binding"/>
    <property type="evidence" value="ECO:0007669"/>
    <property type="project" value="UniProtKB-UniRule"/>
</dbReference>
<dbReference type="GO" id="GO:0004810">
    <property type="term" value="F:CCA tRNA nucleotidyltransferase activity"/>
    <property type="evidence" value="ECO:0007669"/>
    <property type="project" value="InterPro"/>
</dbReference>
<dbReference type="GO" id="GO:0000049">
    <property type="term" value="F:tRNA binding"/>
    <property type="evidence" value="ECO:0007669"/>
    <property type="project" value="UniProtKB-UniRule"/>
</dbReference>
<dbReference type="GO" id="GO:0140741">
    <property type="term" value="F:tRNA-uracil-4 sulfurtransferase activity"/>
    <property type="evidence" value="ECO:0007669"/>
    <property type="project" value="UniProtKB-EC"/>
</dbReference>
<dbReference type="GO" id="GO:0009228">
    <property type="term" value="P:thiamine biosynthetic process"/>
    <property type="evidence" value="ECO:0007669"/>
    <property type="project" value="UniProtKB-KW"/>
</dbReference>
<dbReference type="GO" id="GO:0009229">
    <property type="term" value="P:thiamine diphosphate biosynthetic process"/>
    <property type="evidence" value="ECO:0007669"/>
    <property type="project" value="UniProtKB-UniRule"/>
</dbReference>
<dbReference type="GO" id="GO:0052837">
    <property type="term" value="P:thiazole biosynthetic process"/>
    <property type="evidence" value="ECO:0007669"/>
    <property type="project" value="InterPro"/>
</dbReference>
<dbReference type="GO" id="GO:0002937">
    <property type="term" value="P:tRNA 4-thiouridine biosynthesis"/>
    <property type="evidence" value="ECO:0007669"/>
    <property type="project" value="TreeGrafter"/>
</dbReference>
<dbReference type="CDD" id="cd01712">
    <property type="entry name" value="PPase_ThiI"/>
    <property type="match status" value="1"/>
</dbReference>
<dbReference type="CDD" id="cd00158">
    <property type="entry name" value="RHOD"/>
    <property type="match status" value="1"/>
</dbReference>
<dbReference type="CDD" id="cd11716">
    <property type="entry name" value="THUMP_ThiI"/>
    <property type="match status" value="1"/>
</dbReference>
<dbReference type="FunFam" id="3.40.50.620:FF:000029">
    <property type="entry name" value="tRNA sulfurtransferase"/>
    <property type="match status" value="1"/>
</dbReference>
<dbReference type="Gene3D" id="3.30.2130.30">
    <property type="match status" value="1"/>
</dbReference>
<dbReference type="Gene3D" id="3.40.50.620">
    <property type="entry name" value="HUPs"/>
    <property type="match status" value="1"/>
</dbReference>
<dbReference type="Gene3D" id="3.40.250.10">
    <property type="entry name" value="Rhodanese-like domain"/>
    <property type="match status" value="1"/>
</dbReference>
<dbReference type="HAMAP" id="MF_00021">
    <property type="entry name" value="ThiI"/>
    <property type="match status" value="1"/>
</dbReference>
<dbReference type="InterPro" id="IPR001763">
    <property type="entry name" value="Rhodanese-like_dom"/>
</dbReference>
<dbReference type="InterPro" id="IPR036873">
    <property type="entry name" value="Rhodanese-like_dom_sf"/>
</dbReference>
<dbReference type="InterPro" id="IPR014729">
    <property type="entry name" value="Rossmann-like_a/b/a_fold"/>
</dbReference>
<dbReference type="InterPro" id="IPR020536">
    <property type="entry name" value="ThiI_AANH"/>
</dbReference>
<dbReference type="InterPro" id="IPR049961">
    <property type="entry name" value="ThiI_N"/>
</dbReference>
<dbReference type="InterPro" id="IPR026340">
    <property type="entry name" value="THII_Thiazole_biosynth_dom"/>
</dbReference>
<dbReference type="InterPro" id="IPR004114">
    <property type="entry name" value="THUMP_dom"/>
</dbReference>
<dbReference type="InterPro" id="IPR049962">
    <property type="entry name" value="THUMP_ThiI"/>
</dbReference>
<dbReference type="InterPro" id="IPR003720">
    <property type="entry name" value="tRNA_STrfase"/>
</dbReference>
<dbReference type="InterPro" id="IPR050102">
    <property type="entry name" value="tRNA_sulfurtransferase_ThiI"/>
</dbReference>
<dbReference type="NCBIfam" id="TIGR04271">
    <property type="entry name" value="ThiI_C_thiazole"/>
    <property type="match status" value="1"/>
</dbReference>
<dbReference type="NCBIfam" id="TIGR00342">
    <property type="entry name" value="tRNA uracil 4-sulfurtransferase ThiI"/>
    <property type="match status" value="1"/>
</dbReference>
<dbReference type="PANTHER" id="PTHR43209">
    <property type="entry name" value="TRNA SULFURTRANSFERASE"/>
    <property type="match status" value="1"/>
</dbReference>
<dbReference type="PANTHER" id="PTHR43209:SF1">
    <property type="entry name" value="TRNA SULFURTRANSFERASE"/>
    <property type="match status" value="1"/>
</dbReference>
<dbReference type="Pfam" id="PF02568">
    <property type="entry name" value="ThiI"/>
    <property type="match status" value="1"/>
</dbReference>
<dbReference type="Pfam" id="PF02926">
    <property type="entry name" value="THUMP"/>
    <property type="match status" value="1"/>
</dbReference>
<dbReference type="SMART" id="SM00981">
    <property type="entry name" value="THUMP"/>
    <property type="match status" value="1"/>
</dbReference>
<dbReference type="SUPFAM" id="SSF52402">
    <property type="entry name" value="Adenine nucleotide alpha hydrolases-like"/>
    <property type="match status" value="1"/>
</dbReference>
<dbReference type="SUPFAM" id="SSF52821">
    <property type="entry name" value="Rhodanese/Cell cycle control phosphatase"/>
    <property type="match status" value="1"/>
</dbReference>
<dbReference type="SUPFAM" id="SSF143437">
    <property type="entry name" value="THUMP domain-like"/>
    <property type="match status" value="1"/>
</dbReference>
<dbReference type="PROSITE" id="PS50206">
    <property type="entry name" value="RHODANESE_3"/>
    <property type="match status" value="1"/>
</dbReference>
<dbReference type="PROSITE" id="PS51165">
    <property type="entry name" value="THUMP"/>
    <property type="match status" value="1"/>
</dbReference>
<protein>
    <recommendedName>
        <fullName evidence="1">tRNA sulfurtransferase</fullName>
        <ecNumber evidence="1">2.8.1.4</ecNumber>
    </recommendedName>
    <alternativeName>
        <fullName evidence="1">Sulfur carrier protein ThiS sulfurtransferase</fullName>
    </alternativeName>
    <alternativeName>
        <fullName evidence="1">Thiamine biosynthesis protein ThiI</fullName>
    </alternativeName>
    <alternativeName>
        <fullName evidence="1">tRNA 4-thiouridine synthase</fullName>
    </alternativeName>
</protein>
<comment type="function">
    <text evidence="1">Catalyzes the ATP-dependent transfer of a sulfur to tRNA to produce 4-thiouridine in position 8 of tRNAs, which functions as a near-UV photosensor. Also catalyzes the transfer of sulfur to the sulfur carrier protein ThiS, forming ThiS-thiocarboxylate. This is a step in the synthesis of thiazole, in the thiamine biosynthesis pathway. The sulfur is donated as persulfide by IscS.</text>
</comment>
<comment type="catalytic activity">
    <reaction evidence="1">
        <text>[ThiI sulfur-carrier protein]-S-sulfanyl-L-cysteine + a uridine in tRNA + 2 reduced [2Fe-2S]-[ferredoxin] + ATP + H(+) = [ThiI sulfur-carrier protein]-L-cysteine + a 4-thiouridine in tRNA + 2 oxidized [2Fe-2S]-[ferredoxin] + AMP + diphosphate</text>
        <dbReference type="Rhea" id="RHEA:24176"/>
        <dbReference type="Rhea" id="RHEA-COMP:10000"/>
        <dbReference type="Rhea" id="RHEA-COMP:10001"/>
        <dbReference type="Rhea" id="RHEA-COMP:13337"/>
        <dbReference type="Rhea" id="RHEA-COMP:13338"/>
        <dbReference type="Rhea" id="RHEA-COMP:13339"/>
        <dbReference type="Rhea" id="RHEA-COMP:13340"/>
        <dbReference type="ChEBI" id="CHEBI:15378"/>
        <dbReference type="ChEBI" id="CHEBI:29950"/>
        <dbReference type="ChEBI" id="CHEBI:30616"/>
        <dbReference type="ChEBI" id="CHEBI:33019"/>
        <dbReference type="ChEBI" id="CHEBI:33737"/>
        <dbReference type="ChEBI" id="CHEBI:33738"/>
        <dbReference type="ChEBI" id="CHEBI:61963"/>
        <dbReference type="ChEBI" id="CHEBI:65315"/>
        <dbReference type="ChEBI" id="CHEBI:136798"/>
        <dbReference type="ChEBI" id="CHEBI:456215"/>
        <dbReference type="EC" id="2.8.1.4"/>
    </reaction>
</comment>
<comment type="catalytic activity">
    <reaction evidence="1">
        <text>[ThiS sulfur-carrier protein]-C-terminal Gly-Gly-AMP + S-sulfanyl-L-cysteinyl-[cysteine desulfurase] + AH2 = [ThiS sulfur-carrier protein]-C-terminal-Gly-aminoethanethioate + L-cysteinyl-[cysteine desulfurase] + A + AMP + 2 H(+)</text>
        <dbReference type="Rhea" id="RHEA:43340"/>
        <dbReference type="Rhea" id="RHEA-COMP:12157"/>
        <dbReference type="Rhea" id="RHEA-COMP:12158"/>
        <dbReference type="Rhea" id="RHEA-COMP:12910"/>
        <dbReference type="Rhea" id="RHEA-COMP:19908"/>
        <dbReference type="ChEBI" id="CHEBI:13193"/>
        <dbReference type="ChEBI" id="CHEBI:15378"/>
        <dbReference type="ChEBI" id="CHEBI:17499"/>
        <dbReference type="ChEBI" id="CHEBI:29950"/>
        <dbReference type="ChEBI" id="CHEBI:61963"/>
        <dbReference type="ChEBI" id="CHEBI:90618"/>
        <dbReference type="ChEBI" id="CHEBI:232372"/>
        <dbReference type="ChEBI" id="CHEBI:456215"/>
    </reaction>
</comment>
<comment type="pathway">
    <text evidence="1">Cofactor biosynthesis; thiamine diphosphate biosynthesis.</text>
</comment>
<comment type="subcellular location">
    <subcellularLocation>
        <location evidence="1">Cytoplasm</location>
    </subcellularLocation>
</comment>
<comment type="similarity">
    <text evidence="1">Belongs to the ThiI family.</text>
</comment>
<feature type="chain" id="PRO_0000154885" description="tRNA sulfurtransferase">
    <location>
        <begin position="1"/>
        <end position="482"/>
    </location>
</feature>
<feature type="domain" description="THUMP" evidence="1">
    <location>
        <begin position="61"/>
        <end position="165"/>
    </location>
</feature>
<feature type="domain" description="Rhodanese" evidence="1">
    <location>
        <begin position="404"/>
        <end position="482"/>
    </location>
</feature>
<feature type="active site" description="Cysteine persulfide intermediate" evidence="1">
    <location>
        <position position="456"/>
    </location>
</feature>
<feature type="binding site" evidence="1">
    <location>
        <begin position="183"/>
        <end position="184"/>
    </location>
    <ligand>
        <name>ATP</name>
        <dbReference type="ChEBI" id="CHEBI:30616"/>
    </ligand>
</feature>
<feature type="binding site" evidence="1">
    <location>
        <position position="265"/>
    </location>
    <ligand>
        <name>ATP</name>
        <dbReference type="ChEBI" id="CHEBI:30616"/>
    </ligand>
</feature>
<feature type="binding site" evidence="1">
    <location>
        <position position="287"/>
    </location>
    <ligand>
        <name>ATP</name>
        <dbReference type="ChEBI" id="CHEBI:30616"/>
    </ligand>
</feature>
<feature type="binding site" evidence="1">
    <location>
        <position position="296"/>
    </location>
    <ligand>
        <name>ATP</name>
        <dbReference type="ChEBI" id="CHEBI:30616"/>
    </ligand>
</feature>
<feature type="disulfide bond" description="Redox-active" evidence="1">
    <location>
        <begin position="344"/>
        <end position="456"/>
    </location>
</feature>
<reference key="1">
    <citation type="journal article" date="2005" name="Proc. Natl. Acad. Sci. U.S.A.">
        <title>Complete genome sequence of Vibrio fischeri: a symbiotic bacterium with pathogenic congeners.</title>
        <authorList>
            <person name="Ruby E.G."/>
            <person name="Urbanowski M."/>
            <person name="Campbell J."/>
            <person name="Dunn A."/>
            <person name="Faini M."/>
            <person name="Gunsalus R."/>
            <person name="Lostroh P."/>
            <person name="Lupp C."/>
            <person name="McCann J."/>
            <person name="Millikan D."/>
            <person name="Schaefer A."/>
            <person name="Stabb E."/>
            <person name="Stevens A."/>
            <person name="Visick K."/>
            <person name="Whistler C."/>
            <person name="Greenberg E.P."/>
        </authorList>
    </citation>
    <scope>NUCLEOTIDE SEQUENCE [LARGE SCALE GENOMIC DNA]</scope>
    <source>
        <strain>ATCC 700601 / ES114</strain>
    </source>
</reference>
<name>THII_ALIF1</name>
<organism>
    <name type="scientific">Aliivibrio fischeri (strain ATCC 700601 / ES114)</name>
    <name type="common">Vibrio fischeri</name>
    <dbReference type="NCBI Taxonomy" id="312309"/>
    <lineage>
        <taxon>Bacteria</taxon>
        <taxon>Pseudomonadati</taxon>
        <taxon>Pseudomonadota</taxon>
        <taxon>Gammaproteobacteria</taxon>
        <taxon>Vibrionales</taxon>
        <taxon>Vibrionaceae</taxon>
        <taxon>Aliivibrio</taxon>
    </lineage>
</organism>
<keyword id="KW-0067">ATP-binding</keyword>
<keyword id="KW-0963">Cytoplasm</keyword>
<keyword id="KW-1015">Disulfide bond</keyword>
<keyword id="KW-0547">Nucleotide-binding</keyword>
<keyword id="KW-0676">Redox-active center</keyword>
<keyword id="KW-1185">Reference proteome</keyword>
<keyword id="KW-0694">RNA-binding</keyword>
<keyword id="KW-0784">Thiamine biosynthesis</keyword>
<keyword id="KW-0808">Transferase</keyword>
<keyword id="KW-0820">tRNA-binding</keyword>
<evidence type="ECO:0000255" key="1">
    <source>
        <dbReference type="HAMAP-Rule" id="MF_00021"/>
    </source>
</evidence>
<proteinExistence type="inferred from homology"/>
<sequence>MKFIVKPHPEVFVKSDSVRKRFIRILESNLRSIIQRETKGVEVINRRDHIEVTGLSDEYRDVTLAVLTQTPGIHHVLEVKQSGFKDMHDIFEQCLEMNREVIEGKTFCVRVKRRGNHDFTSIELERYVGGGLNQSVESASVRLKNPEVTVKFEVANDKLNLIIARHKGLGGFPLGTQEDVLSLISGGFDSGVSSYLHIKRGSKVHYLFFNLGGPAHEIGVKQVSHFLWKKYGSSAKVKFISVDFDPVVAEILEKVDDGQMGVILKRMFMRAGGMVAEKFGIEGLVTGEALGQVSSQTLTNLRHIDNVTDSLILRPLINWDKEDIIDLAREIGTEDFAKTMPEYCGVISKKPTVKAVKEKLEKEEAKFDFSVLEQAVYNARVMDIRDIEKESQEQAPEVEMVSELGSDVVVLDIRSAEEEDEKPLELDGVEVTHIPFFKLATKFGDLDQSKEYLLYCERGVMSRLQALLLIENGYKNVKVYRP</sequence>
<accession>Q5E6Y5</accession>
<gene>
    <name evidence="1" type="primary">thiI</name>
    <name type="ordered locus">VF_0716</name>
</gene>